<proteinExistence type="inferred from homology"/>
<name>FKH02_CAEBR</name>
<reference evidence="7" key="1">
    <citation type="journal article" date="2003" name="PLoS Biol.">
        <title>The genome sequence of Caenorhabditis briggsae: a platform for comparative genomics.</title>
        <authorList>
            <person name="Stein L.D."/>
            <person name="Bao Z."/>
            <person name="Blasiar D."/>
            <person name="Blumenthal T."/>
            <person name="Brent M.R."/>
            <person name="Chen N."/>
            <person name="Chinwalla A."/>
            <person name="Clarke L."/>
            <person name="Clee C."/>
            <person name="Coghlan A."/>
            <person name="Coulson A."/>
            <person name="D'Eustachio P."/>
            <person name="Fitch D.H.A."/>
            <person name="Fulton L.A."/>
            <person name="Fulton R.E."/>
            <person name="Griffiths-Jones S."/>
            <person name="Harris T.W."/>
            <person name="Hillier L.W."/>
            <person name="Kamath R."/>
            <person name="Kuwabara P.E."/>
            <person name="Mardis E.R."/>
            <person name="Marra M.A."/>
            <person name="Miner T.L."/>
            <person name="Minx P."/>
            <person name="Mullikin J.C."/>
            <person name="Plumb R.W."/>
            <person name="Rogers J."/>
            <person name="Schein J.E."/>
            <person name="Sohrmann M."/>
            <person name="Spieth J."/>
            <person name="Stajich J.E."/>
            <person name="Wei C."/>
            <person name="Willey D."/>
            <person name="Wilson R.K."/>
            <person name="Durbin R.M."/>
            <person name="Waterston R.H."/>
        </authorList>
    </citation>
    <scope>NUCLEOTIDE SEQUENCE [LARGE SCALE GENOMIC DNA]</scope>
    <source>
        <strain evidence="7">AF16</strain>
    </source>
</reference>
<reference evidence="6" key="2">
    <citation type="journal article" date="2000" name="Development">
        <title>Evolutionary conservation of redundancy between a diverged pair of forkhead transcription factor homologues.</title>
        <authorList>
            <person name="Molin L."/>
            <person name="Mounsey A."/>
            <person name="Aslam S."/>
            <person name="Bauer P."/>
            <person name="Young J."/>
            <person name="James M."/>
            <person name="Sharma-Oates A."/>
            <person name="Hope I.A."/>
        </authorList>
    </citation>
    <scope>FUNCTION</scope>
    <scope>DISRUPTION PHENOTYPE</scope>
</reference>
<comment type="function">
    <text evidence="1 5">Transcription factor (By similarity). Plays a role in embryogenesis and later development, perhaps acting redundantly with forkhead protein pes-1 (PubMed:11044397).</text>
</comment>
<comment type="subcellular location">
    <subcellularLocation>
        <location evidence="2 3">Nucleus</location>
    </subcellularLocation>
</comment>
<comment type="disruption phenotype">
    <text evidence="5">RNAi-mediated knockdown by injection into adults causes almost half of their progeny to terminally arrest at the larval L1 stage and the rest developed into fertile adults (PubMed:11044397). Simultaneous knockdown of forkhead gene pes-1 causes 8% embryonic lethality and 80% of progeny to arrest at larval L1 stage (PubMed:11044397).</text>
</comment>
<evidence type="ECO:0000250" key="1">
    <source>
        <dbReference type="UniProtKB" id="Q12952"/>
    </source>
</evidence>
<evidence type="ECO:0000250" key="2">
    <source>
        <dbReference type="UniProtKB" id="Q22510"/>
    </source>
</evidence>
<evidence type="ECO:0000255" key="3">
    <source>
        <dbReference type="PROSITE-ProRule" id="PRU00089"/>
    </source>
</evidence>
<evidence type="ECO:0000256" key="4">
    <source>
        <dbReference type="SAM" id="MobiDB-lite"/>
    </source>
</evidence>
<evidence type="ECO:0000269" key="5">
    <source>
    </source>
</evidence>
<evidence type="ECO:0000305" key="6"/>
<evidence type="ECO:0000312" key="7">
    <source>
        <dbReference type="Proteomes" id="UP000008549"/>
    </source>
</evidence>
<evidence type="ECO:0000312" key="8">
    <source>
        <dbReference type="WormBase" id="CBG14280"/>
    </source>
</evidence>
<dbReference type="EMBL" id="HE600983">
    <property type="protein sequence ID" value="CAP32863.1"/>
    <property type="molecule type" value="Genomic_DNA"/>
</dbReference>
<dbReference type="RefSeq" id="XP_002644424.1">
    <property type="nucleotide sequence ID" value="XM_002644378.1"/>
</dbReference>
<dbReference type="SMR" id="A8XJN7"/>
<dbReference type="FunCoup" id="A8XJN7">
    <property type="interactions" value="149"/>
</dbReference>
<dbReference type="STRING" id="6238.A8XJN7"/>
<dbReference type="EnsemblMetazoa" id="CBG14280.1">
    <property type="protein sequence ID" value="CBG14280.1"/>
    <property type="gene ID" value="WBGene00034833"/>
</dbReference>
<dbReference type="GeneID" id="8586420"/>
<dbReference type="KEGG" id="cbr:CBG_14280"/>
<dbReference type="CTD" id="8586420"/>
<dbReference type="WormBase" id="CBG14280">
    <property type="protein sequence ID" value="CBP03597"/>
    <property type="gene ID" value="WBGene00034833"/>
    <property type="gene designation" value="Cbr-fkh-2"/>
</dbReference>
<dbReference type="eggNOG" id="KOG2294">
    <property type="taxonomic scope" value="Eukaryota"/>
</dbReference>
<dbReference type="HOGENOM" id="CLU_1070538_0_0_1"/>
<dbReference type="InParanoid" id="A8XJN7"/>
<dbReference type="OMA" id="IMMAIKN"/>
<dbReference type="Proteomes" id="UP000008549">
    <property type="component" value="Unassembled WGS sequence"/>
</dbReference>
<dbReference type="GO" id="GO:0005634">
    <property type="term" value="C:nucleus"/>
    <property type="evidence" value="ECO:0007669"/>
    <property type="project" value="UniProtKB-SubCell"/>
</dbReference>
<dbReference type="GO" id="GO:0000981">
    <property type="term" value="F:DNA-binding transcription factor activity, RNA polymerase II-specific"/>
    <property type="evidence" value="ECO:0000318"/>
    <property type="project" value="GO_Central"/>
</dbReference>
<dbReference type="GO" id="GO:0000978">
    <property type="term" value="F:RNA polymerase II cis-regulatory region sequence-specific DNA binding"/>
    <property type="evidence" value="ECO:0000318"/>
    <property type="project" value="GO_Central"/>
</dbReference>
<dbReference type="GO" id="GO:0009653">
    <property type="term" value="P:anatomical structure morphogenesis"/>
    <property type="evidence" value="ECO:0000318"/>
    <property type="project" value="GO_Central"/>
</dbReference>
<dbReference type="GO" id="GO:0030154">
    <property type="term" value="P:cell differentiation"/>
    <property type="evidence" value="ECO:0000318"/>
    <property type="project" value="GO_Central"/>
</dbReference>
<dbReference type="GO" id="GO:0016358">
    <property type="term" value="P:dendrite development"/>
    <property type="evidence" value="ECO:0007669"/>
    <property type="project" value="EnsemblMetazoa"/>
</dbReference>
<dbReference type="GO" id="GO:0009792">
    <property type="term" value="P:embryo development ending in birth or egg hatching"/>
    <property type="evidence" value="ECO:0007669"/>
    <property type="project" value="EnsemblMetazoa"/>
</dbReference>
<dbReference type="GO" id="GO:0002119">
    <property type="term" value="P:nematode larval development"/>
    <property type="evidence" value="ECO:0007669"/>
    <property type="project" value="EnsemblMetazoa"/>
</dbReference>
<dbReference type="GO" id="GO:0048665">
    <property type="term" value="P:neuron fate specification"/>
    <property type="evidence" value="ECO:0007669"/>
    <property type="project" value="EnsemblMetazoa"/>
</dbReference>
<dbReference type="GO" id="GO:1905515">
    <property type="term" value="P:non-motile cilium assembly"/>
    <property type="evidence" value="ECO:0007669"/>
    <property type="project" value="EnsemblMetazoa"/>
</dbReference>
<dbReference type="GO" id="GO:0045944">
    <property type="term" value="P:positive regulation of transcription by RNA polymerase II"/>
    <property type="evidence" value="ECO:0007669"/>
    <property type="project" value="EnsemblMetazoa"/>
</dbReference>
<dbReference type="GO" id="GO:0006357">
    <property type="term" value="P:regulation of transcription by RNA polymerase II"/>
    <property type="evidence" value="ECO:0000318"/>
    <property type="project" value="GO_Central"/>
</dbReference>
<dbReference type="CDD" id="cd20021">
    <property type="entry name" value="FH_FOXG"/>
    <property type="match status" value="1"/>
</dbReference>
<dbReference type="FunFam" id="1.10.10.10:FF:000135">
    <property type="entry name" value="forkhead box protein G1"/>
    <property type="match status" value="1"/>
</dbReference>
<dbReference type="Gene3D" id="1.10.10.10">
    <property type="entry name" value="Winged helix-like DNA-binding domain superfamily/Winged helix DNA-binding domain"/>
    <property type="match status" value="1"/>
</dbReference>
<dbReference type="InterPro" id="IPR001766">
    <property type="entry name" value="Fork_head_dom"/>
</dbReference>
<dbReference type="InterPro" id="IPR047208">
    <property type="entry name" value="FOXG1"/>
</dbReference>
<dbReference type="InterPro" id="IPR018122">
    <property type="entry name" value="TF_fork_head_CS_1"/>
</dbReference>
<dbReference type="InterPro" id="IPR030456">
    <property type="entry name" value="TF_fork_head_CS_2"/>
</dbReference>
<dbReference type="InterPro" id="IPR036388">
    <property type="entry name" value="WH-like_DNA-bd_sf"/>
</dbReference>
<dbReference type="InterPro" id="IPR036390">
    <property type="entry name" value="WH_DNA-bd_sf"/>
</dbReference>
<dbReference type="PANTHER" id="PTHR46617">
    <property type="entry name" value="FORKHEAD BOX PROTEIN G1"/>
    <property type="match status" value="1"/>
</dbReference>
<dbReference type="PANTHER" id="PTHR46617:SF3">
    <property type="entry name" value="FORKHEAD BOX PROTEIN G1"/>
    <property type="match status" value="1"/>
</dbReference>
<dbReference type="Pfam" id="PF00250">
    <property type="entry name" value="Forkhead"/>
    <property type="match status" value="1"/>
</dbReference>
<dbReference type="PRINTS" id="PR00053">
    <property type="entry name" value="FORKHEAD"/>
</dbReference>
<dbReference type="SMART" id="SM00339">
    <property type="entry name" value="FH"/>
    <property type="match status" value="1"/>
</dbReference>
<dbReference type="SUPFAM" id="SSF46785">
    <property type="entry name" value="Winged helix' DNA-binding domain"/>
    <property type="match status" value="1"/>
</dbReference>
<dbReference type="PROSITE" id="PS00657">
    <property type="entry name" value="FORK_HEAD_1"/>
    <property type="match status" value="1"/>
</dbReference>
<dbReference type="PROSITE" id="PS00658">
    <property type="entry name" value="FORK_HEAD_2"/>
    <property type="match status" value="1"/>
</dbReference>
<dbReference type="PROSITE" id="PS50039">
    <property type="entry name" value="FORK_HEAD_3"/>
    <property type="match status" value="1"/>
</dbReference>
<sequence length="279" mass="31322">MARFSILDLCPDLVEKAMNVQNGLVSMQSTLQLQAQKDINDPCTSIDSTTDIMSNPANDNSDYLLDESVDDERSESTSSKDSKSPCSNSSDDKKPSSPNDKPPFSYNALIMMAIKNSPEKRLTLAGIYDYILTNYPFYRDNKQGWQNSIRHNLSLNKCFVKVPRNFDDPGKGNYWMLDATCEDEVFIGGATGKLRRRPSTLSRARMDAYKQYGAAAANLFPYFNPGLPPMPRTPFITTPPTAFLPRPMMPMPSLAPVFTQPELIQMYLNQQQGLFAKLQ</sequence>
<accession>A8XJN7</accession>
<keyword id="KW-0238">DNA-binding</keyword>
<keyword id="KW-0539">Nucleus</keyword>
<keyword id="KW-1185">Reference proteome</keyword>
<organism evidence="7">
    <name type="scientific">Caenorhabditis briggsae</name>
    <dbReference type="NCBI Taxonomy" id="6238"/>
    <lineage>
        <taxon>Eukaryota</taxon>
        <taxon>Metazoa</taxon>
        <taxon>Ecdysozoa</taxon>
        <taxon>Nematoda</taxon>
        <taxon>Chromadorea</taxon>
        <taxon>Rhabditida</taxon>
        <taxon>Rhabditina</taxon>
        <taxon>Rhabditomorpha</taxon>
        <taxon>Rhabditoidea</taxon>
        <taxon>Rhabditidae</taxon>
        <taxon>Peloderinae</taxon>
        <taxon>Caenorhabditis</taxon>
    </lineage>
</organism>
<protein>
    <recommendedName>
        <fullName evidence="6">Forkhead box protein fkh-2</fullName>
    </recommendedName>
    <alternativeName>
        <fullName evidence="8">Forkhead transcription factor family member fkh-2</fullName>
    </alternativeName>
</protein>
<feature type="chain" id="PRO_0000455282" description="Forkhead box protein fkh-2">
    <location>
        <begin position="1"/>
        <end position="279"/>
    </location>
</feature>
<feature type="DNA-binding region" description="Fork-head" evidence="3">
    <location>
        <begin position="101"/>
        <end position="196"/>
    </location>
</feature>
<feature type="region of interest" description="Disordered" evidence="4">
    <location>
        <begin position="42"/>
        <end position="102"/>
    </location>
</feature>
<feature type="compositionally biased region" description="Polar residues" evidence="4">
    <location>
        <begin position="42"/>
        <end position="61"/>
    </location>
</feature>
<feature type="compositionally biased region" description="Acidic residues" evidence="4">
    <location>
        <begin position="64"/>
        <end position="73"/>
    </location>
</feature>
<feature type="compositionally biased region" description="Basic and acidic residues" evidence="4">
    <location>
        <begin position="74"/>
        <end position="83"/>
    </location>
</feature>
<gene>
    <name evidence="8" type="primary">fkh-2</name>
    <name evidence="8" type="synonym">Cbr-fkh-2</name>
    <name evidence="8" type="ORF">CBG14280</name>
</gene>